<proteinExistence type="inferred from homology"/>
<feature type="chain" id="PRO_0000400113" description="D-inositol 3-phosphate glycosyltransferase 2">
    <location>
        <begin position="1"/>
        <end position="427"/>
    </location>
</feature>
<feature type="binding site" evidence="1">
    <location>
        <position position="14"/>
    </location>
    <ligand>
        <name>1D-myo-inositol 3-phosphate</name>
        <dbReference type="ChEBI" id="CHEBI:58401"/>
    </ligand>
</feature>
<feature type="binding site" evidence="1">
    <location>
        <begin position="20"/>
        <end position="21"/>
    </location>
    <ligand>
        <name>UDP-N-acetyl-alpha-D-glucosamine</name>
        <dbReference type="ChEBI" id="CHEBI:57705"/>
    </ligand>
</feature>
<feature type="binding site" evidence="1">
    <location>
        <begin position="25"/>
        <end position="30"/>
    </location>
    <ligand>
        <name>1D-myo-inositol 3-phosphate</name>
        <dbReference type="ChEBI" id="CHEBI:58401"/>
    </ligand>
</feature>
<feature type="binding site" evidence="1">
    <location>
        <position position="28"/>
    </location>
    <ligand>
        <name>UDP-N-acetyl-alpha-D-glucosamine</name>
        <dbReference type="ChEBI" id="CHEBI:57705"/>
    </ligand>
</feature>
<feature type="binding site" evidence="1">
    <location>
        <position position="83"/>
    </location>
    <ligand>
        <name>1D-myo-inositol 3-phosphate</name>
        <dbReference type="ChEBI" id="CHEBI:58401"/>
    </ligand>
</feature>
<feature type="binding site" evidence="1">
    <location>
        <position position="116"/>
    </location>
    <ligand>
        <name>1D-myo-inositol 3-phosphate</name>
        <dbReference type="ChEBI" id="CHEBI:58401"/>
    </ligand>
</feature>
<feature type="binding site" evidence="1">
    <location>
        <position position="140"/>
    </location>
    <ligand>
        <name>1D-myo-inositol 3-phosphate</name>
        <dbReference type="ChEBI" id="CHEBI:58401"/>
    </ligand>
</feature>
<feature type="binding site" evidence="1">
    <location>
        <position position="160"/>
    </location>
    <ligand>
        <name>1D-myo-inositol 3-phosphate</name>
        <dbReference type="ChEBI" id="CHEBI:58401"/>
    </ligand>
</feature>
<feature type="binding site" evidence="1">
    <location>
        <position position="234"/>
    </location>
    <ligand>
        <name>UDP-N-acetyl-alpha-D-glucosamine</name>
        <dbReference type="ChEBI" id="CHEBI:57705"/>
    </ligand>
</feature>
<feature type="binding site" evidence="1">
    <location>
        <position position="239"/>
    </location>
    <ligand>
        <name>UDP-N-acetyl-alpha-D-glucosamine</name>
        <dbReference type="ChEBI" id="CHEBI:57705"/>
    </ligand>
</feature>
<feature type="binding site" evidence="1">
    <location>
        <position position="300"/>
    </location>
    <ligand>
        <name>UDP-N-acetyl-alpha-D-glucosamine</name>
        <dbReference type="ChEBI" id="CHEBI:57705"/>
    </ligand>
</feature>
<feature type="binding site" evidence="1">
    <location>
        <position position="309"/>
    </location>
    <ligand>
        <name>Mg(2+)</name>
        <dbReference type="ChEBI" id="CHEBI:18420"/>
    </ligand>
</feature>
<feature type="binding site" evidence="1">
    <location>
        <position position="310"/>
    </location>
    <ligand>
        <name>Mg(2+)</name>
        <dbReference type="ChEBI" id="CHEBI:18420"/>
    </ligand>
</feature>
<feature type="binding site" evidence="1">
    <location>
        <position position="312"/>
    </location>
    <ligand>
        <name>Mg(2+)</name>
        <dbReference type="ChEBI" id="CHEBI:18420"/>
    </ligand>
</feature>
<feature type="binding site" evidence="1">
    <location>
        <position position="322"/>
    </location>
    <ligand>
        <name>UDP-N-acetyl-alpha-D-glucosamine</name>
        <dbReference type="ChEBI" id="CHEBI:57705"/>
    </ligand>
</feature>
<feature type="binding site" evidence="1">
    <location>
        <position position="330"/>
    </location>
    <ligand>
        <name>UDP-N-acetyl-alpha-D-glucosamine</name>
        <dbReference type="ChEBI" id="CHEBI:57705"/>
    </ligand>
</feature>
<feature type="binding site" evidence="1">
    <location>
        <position position="336"/>
    </location>
    <ligand>
        <name>Mg(2+)</name>
        <dbReference type="ChEBI" id="CHEBI:18420"/>
    </ligand>
</feature>
<evidence type="ECO:0000255" key="1">
    <source>
        <dbReference type="HAMAP-Rule" id="MF_01695"/>
    </source>
</evidence>
<organism>
    <name type="scientific">Catenulispora acidiphila (strain DSM 44928 / JCM 14897 / NBRC 102108 / NRRL B-24433 / ID139908)</name>
    <dbReference type="NCBI Taxonomy" id="479433"/>
    <lineage>
        <taxon>Bacteria</taxon>
        <taxon>Bacillati</taxon>
        <taxon>Actinomycetota</taxon>
        <taxon>Actinomycetes</taxon>
        <taxon>Catenulisporales</taxon>
        <taxon>Catenulisporaceae</taxon>
        <taxon>Catenulispora</taxon>
    </lineage>
</organism>
<reference key="1">
    <citation type="journal article" date="2009" name="Stand. Genomic Sci.">
        <title>Complete genome sequence of Catenulispora acidiphila type strain (ID 139908).</title>
        <authorList>
            <person name="Copeland A."/>
            <person name="Lapidus A."/>
            <person name="Glavina Del Rio T."/>
            <person name="Nolan M."/>
            <person name="Lucas S."/>
            <person name="Chen F."/>
            <person name="Tice H."/>
            <person name="Cheng J.F."/>
            <person name="Bruce D."/>
            <person name="Goodwin L."/>
            <person name="Pitluck S."/>
            <person name="Mikhailova N."/>
            <person name="Pati A."/>
            <person name="Ivanova N."/>
            <person name="Mavromatis K."/>
            <person name="Chen A."/>
            <person name="Palaniappan K."/>
            <person name="Chain P."/>
            <person name="Land M."/>
            <person name="Hauser L."/>
            <person name="Chang Y.J."/>
            <person name="Jeffries C.D."/>
            <person name="Chertkov O."/>
            <person name="Brettin T."/>
            <person name="Detter J.C."/>
            <person name="Han C."/>
            <person name="Ali Z."/>
            <person name="Tindall B.J."/>
            <person name="Goker M."/>
            <person name="Bristow J."/>
            <person name="Eisen J.A."/>
            <person name="Markowitz V."/>
            <person name="Hugenholtz P."/>
            <person name="Kyrpides N.C."/>
            <person name="Klenk H.P."/>
        </authorList>
    </citation>
    <scope>NUCLEOTIDE SEQUENCE [LARGE SCALE GENOMIC DNA]</scope>
    <source>
        <strain>DSM 44928 / JCM 14897 / NBRC 102108 / NRRL B-24433 / ID139908</strain>
    </source>
</reference>
<keyword id="KW-0328">Glycosyltransferase</keyword>
<keyword id="KW-0460">Magnesium</keyword>
<keyword id="KW-0479">Metal-binding</keyword>
<keyword id="KW-1185">Reference proteome</keyword>
<keyword id="KW-0808">Transferase</keyword>
<accession>C7QKE8</accession>
<dbReference type="EC" id="2.4.1.250" evidence="1"/>
<dbReference type="EMBL" id="CP001700">
    <property type="protein sequence ID" value="ACU77047.1"/>
    <property type="molecule type" value="Genomic_DNA"/>
</dbReference>
<dbReference type="RefSeq" id="WP_015796772.1">
    <property type="nucleotide sequence ID" value="NC_013131.1"/>
</dbReference>
<dbReference type="SMR" id="C7QKE8"/>
<dbReference type="FunCoup" id="C7QKE8">
    <property type="interactions" value="46"/>
</dbReference>
<dbReference type="STRING" id="479433.Caci_8224"/>
<dbReference type="CAZy" id="GT4">
    <property type="family name" value="Glycosyltransferase Family 4"/>
</dbReference>
<dbReference type="KEGG" id="cai:Caci_8224"/>
<dbReference type="eggNOG" id="COG0438">
    <property type="taxonomic scope" value="Bacteria"/>
</dbReference>
<dbReference type="HOGENOM" id="CLU_009583_2_3_11"/>
<dbReference type="InParanoid" id="C7QKE8"/>
<dbReference type="OrthoDB" id="9810929at2"/>
<dbReference type="Proteomes" id="UP000000851">
    <property type="component" value="Chromosome"/>
</dbReference>
<dbReference type="GO" id="GO:0008375">
    <property type="term" value="F:acetylglucosaminyltransferase activity"/>
    <property type="evidence" value="ECO:0007669"/>
    <property type="project" value="UniProtKB-UniRule"/>
</dbReference>
<dbReference type="GO" id="GO:0102710">
    <property type="term" value="F:D-inositol-3-phosphate glycosyltransferase activity"/>
    <property type="evidence" value="ECO:0007669"/>
    <property type="project" value="UniProtKB-EC"/>
</dbReference>
<dbReference type="GO" id="GO:0000287">
    <property type="term" value="F:magnesium ion binding"/>
    <property type="evidence" value="ECO:0007669"/>
    <property type="project" value="UniProtKB-UniRule"/>
</dbReference>
<dbReference type="GO" id="GO:0010125">
    <property type="term" value="P:mycothiol biosynthetic process"/>
    <property type="evidence" value="ECO:0007669"/>
    <property type="project" value="UniProtKB-UniRule"/>
</dbReference>
<dbReference type="CDD" id="cd03800">
    <property type="entry name" value="GT4_sucrose_synthase"/>
    <property type="match status" value="1"/>
</dbReference>
<dbReference type="Gene3D" id="3.40.50.2000">
    <property type="entry name" value="Glycogen Phosphorylase B"/>
    <property type="match status" value="2"/>
</dbReference>
<dbReference type="HAMAP" id="MF_01695">
    <property type="entry name" value="MshA"/>
    <property type="match status" value="1"/>
</dbReference>
<dbReference type="InterPro" id="IPR001296">
    <property type="entry name" value="Glyco_trans_1"/>
</dbReference>
<dbReference type="InterPro" id="IPR028098">
    <property type="entry name" value="Glyco_trans_4-like_N"/>
</dbReference>
<dbReference type="InterPro" id="IPR017814">
    <property type="entry name" value="Mycothiol_biosynthesis_MshA"/>
</dbReference>
<dbReference type="NCBIfam" id="TIGR03449">
    <property type="entry name" value="mycothiol_MshA"/>
    <property type="match status" value="1"/>
</dbReference>
<dbReference type="PANTHER" id="PTHR12526:SF510">
    <property type="entry name" value="D-INOSITOL 3-PHOSPHATE GLYCOSYLTRANSFERASE"/>
    <property type="match status" value="1"/>
</dbReference>
<dbReference type="PANTHER" id="PTHR12526">
    <property type="entry name" value="GLYCOSYLTRANSFERASE"/>
    <property type="match status" value="1"/>
</dbReference>
<dbReference type="Pfam" id="PF13579">
    <property type="entry name" value="Glyco_trans_4_4"/>
    <property type="match status" value="1"/>
</dbReference>
<dbReference type="Pfam" id="PF00534">
    <property type="entry name" value="Glycos_transf_1"/>
    <property type="match status" value="1"/>
</dbReference>
<dbReference type="SUPFAM" id="SSF53756">
    <property type="entry name" value="UDP-Glycosyltransferase/glycogen phosphorylase"/>
    <property type="match status" value="1"/>
</dbReference>
<protein>
    <recommendedName>
        <fullName>D-inositol 3-phosphate glycosyltransferase 2</fullName>
        <ecNumber evidence="1">2.4.1.250</ecNumber>
    </recommendedName>
    <alternativeName>
        <fullName evidence="1">N-acetylglucosamine-inositol-phosphate N-acetylglucosaminyltransferase 2</fullName>
        <shortName evidence="1">GlcNAc-Ins-P N-acetylglucosaminyltransferase 2</shortName>
    </alternativeName>
</protein>
<name>MSHA2_CATAD</name>
<sequence>MESLPRRVALLSVHTSPLHQPGTGDAGGMNVYIVELSRRLADLGIEVEIFTRATTGALPPAVDLAPGVLVRHVTAGPYEGLSKEDLPGQLCAFTSGVLRTEAMHEPGYYDLIHSHYWLSGQVGWLAKERWGVPLIHSMHTLGKVKNAALALGDDPEPTARLVGEDQVVDAADRLIANTDQEASELVRLYGADPGRVSTVNPGVDLDRFRPGDKRAARESVGLPPDAAVLLFVGRIQPLKAPDVLLRAAAELIAREPERREKLVVAVVGGPSGSGLAEPTHLHRLARRLGIADVVRFVKPVDQTRLADWYRAADIAVVPSYSESFGLVAIEAQACGTPVVAARVGGLATAVADGRSGTLVAGHDPGDYATAVAGLLDAPHRLADFGENAVEHAARFGWSATAAATADVYSRSIEDLRALRYRELCAGQ</sequence>
<gene>
    <name evidence="1" type="primary">mshA2</name>
    <name type="ordered locus">Caci_8224</name>
</gene>
<comment type="function">
    <text evidence="1">Catalyzes the transfer of a N-acetyl-glucosamine moiety to 1D-myo-inositol 3-phosphate to produce 1D-myo-inositol 2-acetamido-2-deoxy-glucopyranoside 3-phosphate in the mycothiol biosynthesis pathway.</text>
</comment>
<comment type="catalytic activity">
    <reaction evidence="1">
        <text>1D-myo-inositol 3-phosphate + UDP-N-acetyl-alpha-D-glucosamine = 1D-myo-inositol 2-acetamido-2-deoxy-alpha-D-glucopyranoside 3-phosphate + UDP + H(+)</text>
        <dbReference type="Rhea" id="RHEA:26188"/>
        <dbReference type="ChEBI" id="CHEBI:15378"/>
        <dbReference type="ChEBI" id="CHEBI:57705"/>
        <dbReference type="ChEBI" id="CHEBI:58223"/>
        <dbReference type="ChEBI" id="CHEBI:58401"/>
        <dbReference type="ChEBI" id="CHEBI:58892"/>
        <dbReference type="EC" id="2.4.1.250"/>
    </reaction>
</comment>
<comment type="subunit">
    <text evidence="1">Homodimer.</text>
</comment>
<comment type="similarity">
    <text evidence="1">Belongs to the glycosyltransferase group 1 family. MshA subfamily.</text>
</comment>